<accession>Q5M0R8</accession>
<dbReference type="EC" id="2.3.1.275" evidence="1"/>
<dbReference type="EMBL" id="CP000024">
    <property type="protein sequence ID" value="AAV62183.1"/>
    <property type="molecule type" value="Genomic_DNA"/>
</dbReference>
<dbReference type="RefSeq" id="WP_002950167.1">
    <property type="nucleotide sequence ID" value="NC_006449.1"/>
</dbReference>
<dbReference type="SMR" id="Q5M0R8"/>
<dbReference type="GeneID" id="66898491"/>
<dbReference type="KEGG" id="stc:str0587"/>
<dbReference type="HOGENOM" id="CLU_081254_0_0_9"/>
<dbReference type="UniPathway" id="UPA00085"/>
<dbReference type="GO" id="GO:0005886">
    <property type="term" value="C:plasma membrane"/>
    <property type="evidence" value="ECO:0007669"/>
    <property type="project" value="UniProtKB-SubCell"/>
</dbReference>
<dbReference type="GO" id="GO:0043772">
    <property type="term" value="F:acyl-phosphate glycerol-3-phosphate acyltransferase activity"/>
    <property type="evidence" value="ECO:0007669"/>
    <property type="project" value="UniProtKB-UniRule"/>
</dbReference>
<dbReference type="GO" id="GO:0008654">
    <property type="term" value="P:phospholipid biosynthetic process"/>
    <property type="evidence" value="ECO:0007669"/>
    <property type="project" value="UniProtKB-UniRule"/>
</dbReference>
<dbReference type="HAMAP" id="MF_01043">
    <property type="entry name" value="PlsY"/>
    <property type="match status" value="1"/>
</dbReference>
<dbReference type="InterPro" id="IPR003811">
    <property type="entry name" value="G3P_acylTferase_PlsY"/>
</dbReference>
<dbReference type="NCBIfam" id="TIGR00023">
    <property type="entry name" value="glycerol-3-phosphate 1-O-acyltransferase PlsY"/>
    <property type="match status" value="1"/>
</dbReference>
<dbReference type="PANTHER" id="PTHR30309:SF0">
    <property type="entry name" value="GLYCEROL-3-PHOSPHATE ACYLTRANSFERASE-RELATED"/>
    <property type="match status" value="1"/>
</dbReference>
<dbReference type="PANTHER" id="PTHR30309">
    <property type="entry name" value="INNER MEMBRANE PROTEIN YGIH"/>
    <property type="match status" value="1"/>
</dbReference>
<dbReference type="Pfam" id="PF02660">
    <property type="entry name" value="G3P_acyltransf"/>
    <property type="match status" value="1"/>
</dbReference>
<dbReference type="SMART" id="SM01207">
    <property type="entry name" value="G3P_acyltransf"/>
    <property type="match status" value="1"/>
</dbReference>
<feature type="chain" id="PRO_0000188472" description="Glycerol-3-phosphate acyltransferase">
    <location>
        <begin position="1"/>
        <end position="213"/>
    </location>
</feature>
<feature type="transmembrane region" description="Helical" evidence="1">
    <location>
        <begin position="3"/>
        <end position="23"/>
    </location>
</feature>
<feature type="transmembrane region" description="Helical" evidence="1">
    <location>
        <begin position="55"/>
        <end position="75"/>
    </location>
</feature>
<feature type="transmembrane region" description="Helical" evidence="1">
    <location>
        <begin position="80"/>
        <end position="100"/>
    </location>
</feature>
<feature type="transmembrane region" description="Helical" evidence="1">
    <location>
        <begin position="110"/>
        <end position="130"/>
    </location>
</feature>
<feature type="transmembrane region" description="Helical" evidence="1">
    <location>
        <begin position="142"/>
        <end position="162"/>
    </location>
</feature>
<feature type="transmembrane region" description="Helical" evidence="1">
    <location>
        <begin position="163"/>
        <end position="183"/>
    </location>
</feature>
<comment type="function">
    <text evidence="1">Catalyzes the transfer of an acyl group from acyl-phosphate (acyl-PO(4)) to glycerol-3-phosphate (G3P) to form lysophosphatidic acid (LPA). This enzyme utilizes acyl-phosphate as fatty acyl donor, but not acyl-CoA or acyl-ACP.</text>
</comment>
<comment type="catalytic activity">
    <reaction evidence="1">
        <text>an acyl phosphate + sn-glycerol 3-phosphate = a 1-acyl-sn-glycero-3-phosphate + phosphate</text>
        <dbReference type="Rhea" id="RHEA:34075"/>
        <dbReference type="ChEBI" id="CHEBI:43474"/>
        <dbReference type="ChEBI" id="CHEBI:57597"/>
        <dbReference type="ChEBI" id="CHEBI:57970"/>
        <dbReference type="ChEBI" id="CHEBI:59918"/>
        <dbReference type="EC" id="2.3.1.275"/>
    </reaction>
</comment>
<comment type="pathway">
    <text evidence="1">Lipid metabolism; phospholipid metabolism.</text>
</comment>
<comment type="subunit">
    <text evidence="1">Probably interacts with PlsX.</text>
</comment>
<comment type="subcellular location">
    <subcellularLocation>
        <location evidence="1">Cell membrane</location>
        <topology evidence="1">Multi-pass membrane protein</topology>
    </subcellularLocation>
</comment>
<comment type="similarity">
    <text evidence="1">Belongs to the PlsY family.</text>
</comment>
<name>PLSY_STRT1</name>
<organism>
    <name type="scientific">Streptococcus thermophilus (strain CNRZ 1066)</name>
    <dbReference type="NCBI Taxonomy" id="299768"/>
    <lineage>
        <taxon>Bacteria</taxon>
        <taxon>Bacillati</taxon>
        <taxon>Bacillota</taxon>
        <taxon>Bacilli</taxon>
        <taxon>Lactobacillales</taxon>
        <taxon>Streptococcaceae</taxon>
        <taxon>Streptococcus</taxon>
    </lineage>
</organism>
<keyword id="KW-1003">Cell membrane</keyword>
<keyword id="KW-0444">Lipid biosynthesis</keyword>
<keyword id="KW-0443">Lipid metabolism</keyword>
<keyword id="KW-0472">Membrane</keyword>
<keyword id="KW-0594">Phospholipid biosynthesis</keyword>
<keyword id="KW-1208">Phospholipid metabolism</keyword>
<keyword id="KW-0808">Transferase</keyword>
<keyword id="KW-0812">Transmembrane</keyword>
<keyword id="KW-1133">Transmembrane helix</keyword>
<gene>
    <name evidence="1" type="primary">plsY</name>
    <name type="ordered locus">str0587</name>
</gene>
<reference key="1">
    <citation type="journal article" date="2004" name="Nat. Biotechnol.">
        <title>Complete sequence and comparative genome analysis of the dairy bacterium Streptococcus thermophilus.</title>
        <authorList>
            <person name="Bolotin A."/>
            <person name="Quinquis B."/>
            <person name="Renault P."/>
            <person name="Sorokin A."/>
            <person name="Ehrlich S.D."/>
            <person name="Kulakauskas S."/>
            <person name="Lapidus A."/>
            <person name="Goltsman E."/>
            <person name="Mazur M."/>
            <person name="Pusch G.D."/>
            <person name="Fonstein M."/>
            <person name="Overbeek R."/>
            <person name="Kyprides N."/>
            <person name="Purnelle B."/>
            <person name="Prozzi D."/>
            <person name="Ngui K."/>
            <person name="Masuy D."/>
            <person name="Hancy F."/>
            <person name="Burteau S."/>
            <person name="Boutry M."/>
            <person name="Delcour J."/>
            <person name="Goffeau A."/>
            <person name="Hols P."/>
        </authorList>
    </citation>
    <scope>NUCLEOTIDE SEQUENCE [LARGE SCALE GENOMIC DNA]</scope>
    <source>
        <strain>CNRZ 1066</strain>
    </source>
</reference>
<evidence type="ECO:0000255" key="1">
    <source>
        <dbReference type="HAMAP-Rule" id="MF_01043"/>
    </source>
</evidence>
<protein>
    <recommendedName>
        <fullName evidence="1">Glycerol-3-phosphate acyltransferase</fullName>
    </recommendedName>
    <alternativeName>
        <fullName evidence="1">Acyl-PO4 G3P acyltransferase</fullName>
    </alternativeName>
    <alternativeName>
        <fullName evidence="1">Acyl-phosphate--glycerol-3-phosphate acyltransferase</fullName>
    </alternativeName>
    <alternativeName>
        <fullName evidence="1">G3P acyltransferase</fullName>
        <shortName evidence="1">GPAT</shortName>
        <ecNumber evidence="1">2.3.1.275</ecNumber>
    </alternativeName>
    <alternativeName>
        <fullName evidence="1">Lysophosphatidic acid synthase</fullName>
        <shortName evidence="1">LPA synthase</shortName>
    </alternativeName>
</protein>
<sequence length="213" mass="23236">MKILLLILIAYLLGSIQTGLWIGKVFFHTNLREHGSGNTGTTNTFRVLGKTAGTITFLVDMLKGTLAVLLPIWLGVTEVSPLIIGFFAIIGHVFPFFTGFKGGKAVATSAGVLLGFVPLYFVFLLLVFALTLYLTSMISFSSITAAVVGLITLATFPAIHFLLDGYDPIFSAVLIIIALVIIFRHTENIARIRNHRENLVPFGLNLTKQNPNK</sequence>
<proteinExistence type="inferred from homology"/>